<feature type="chain" id="PRO_0000196134" description="Larval cuticle protein A3A">
    <location>
        <begin position="1"/>
        <end position="134"/>
    </location>
</feature>
<feature type="repeat" description="1">
    <location>
        <begin position="23"/>
        <end position="26"/>
    </location>
</feature>
<feature type="domain" description="Chitin-binding type R&amp;R" evidence="1">
    <location>
        <begin position="40"/>
        <end position="106"/>
    </location>
</feature>
<feature type="repeat" description="2">
    <location>
        <begin position="111"/>
        <end position="114"/>
    </location>
</feature>
<feature type="region of interest" description="Disordered" evidence="2">
    <location>
        <begin position="38"/>
        <end position="80"/>
    </location>
</feature>
<organism>
    <name type="scientific">Tenebrio molitor</name>
    <name type="common">Yellow mealworm beetle</name>
    <dbReference type="NCBI Taxonomy" id="7067"/>
    <lineage>
        <taxon>Eukaryota</taxon>
        <taxon>Metazoa</taxon>
        <taxon>Ecdysozoa</taxon>
        <taxon>Arthropoda</taxon>
        <taxon>Hexapoda</taxon>
        <taxon>Insecta</taxon>
        <taxon>Pterygota</taxon>
        <taxon>Neoptera</taxon>
        <taxon>Endopterygota</taxon>
        <taxon>Coleoptera</taxon>
        <taxon>Polyphaga</taxon>
        <taxon>Cucujiformia</taxon>
        <taxon>Tenebrionidae</taxon>
        <taxon>Tenebrio</taxon>
    </lineage>
</organism>
<sequence>GLIGAPIAAPLGYAAPFARAAVAAPVAVAKTVVADEYDPHPQYSYGYDIQDGLTGDSKNQQETRDGDVVQGSYSLVDPDGTRRTVEYTADPINGFNAVVHREPLVAKAVVAAPAIAKVHAPLAYGAPVAKYAFH</sequence>
<accession>P80683</accession>
<dbReference type="GO" id="GO:0031012">
    <property type="term" value="C:extracellular matrix"/>
    <property type="evidence" value="ECO:0007669"/>
    <property type="project" value="TreeGrafter"/>
</dbReference>
<dbReference type="GO" id="GO:0005615">
    <property type="term" value="C:extracellular space"/>
    <property type="evidence" value="ECO:0007669"/>
    <property type="project" value="TreeGrafter"/>
</dbReference>
<dbReference type="GO" id="GO:0042302">
    <property type="term" value="F:structural constituent of cuticle"/>
    <property type="evidence" value="ECO:0007669"/>
    <property type="project" value="UniProtKB-KW"/>
</dbReference>
<dbReference type="InterPro" id="IPR031311">
    <property type="entry name" value="CHIT_BIND_RR_consensus"/>
</dbReference>
<dbReference type="InterPro" id="IPR000618">
    <property type="entry name" value="Insect_cuticle"/>
</dbReference>
<dbReference type="InterPro" id="IPR051217">
    <property type="entry name" value="Insect_Cuticle_Struc_Prot"/>
</dbReference>
<dbReference type="PANTHER" id="PTHR12236:SF94">
    <property type="entry name" value="CCP84AA-RELATED"/>
    <property type="match status" value="1"/>
</dbReference>
<dbReference type="PANTHER" id="PTHR12236">
    <property type="entry name" value="STRUCTURAL CONTITUENT OF CUTICLE"/>
    <property type="match status" value="1"/>
</dbReference>
<dbReference type="Pfam" id="PF00379">
    <property type="entry name" value="Chitin_bind_4"/>
    <property type="match status" value="1"/>
</dbReference>
<dbReference type="PRINTS" id="PR00947">
    <property type="entry name" value="CUTICLE"/>
</dbReference>
<dbReference type="PROSITE" id="PS00233">
    <property type="entry name" value="CHIT_BIND_RR_1"/>
    <property type="match status" value="1"/>
</dbReference>
<dbReference type="PROSITE" id="PS51155">
    <property type="entry name" value="CHIT_BIND_RR_2"/>
    <property type="match status" value="1"/>
</dbReference>
<proteinExistence type="evidence at protein level"/>
<comment type="function">
    <text>Component of the cuticle of the larva of Tenebrio molitor.</text>
</comment>
<comment type="domain">
    <text>The tetrapeptide (A-A-P-[AV]) repeats found throughout the protein are also present in many proteins constituting the protective envelope of other species.</text>
</comment>
<comment type="mass spectrometry"/>
<keyword id="KW-0193">Cuticle</keyword>
<keyword id="KW-0903">Direct protein sequencing</keyword>
<keyword id="KW-0677">Repeat</keyword>
<evidence type="ECO:0000255" key="1">
    <source>
        <dbReference type="PROSITE-ProRule" id="PRU00497"/>
    </source>
</evidence>
<evidence type="ECO:0000256" key="2">
    <source>
        <dbReference type="SAM" id="MobiDB-lite"/>
    </source>
</evidence>
<evidence type="ECO:0000269" key="3">
    <source>
    </source>
</evidence>
<name>CUA3A_TENMO</name>
<reference key="1">
    <citation type="journal article" date="1997" name="Insect Biochem. Mol. Biol.">
        <title>Sequence studies of proteins from larval and pupal cuticle of the yellow meal worm, Tenebrio molitor.</title>
        <authorList>
            <person name="Andersen S.O."/>
            <person name="Rafn K."/>
            <person name="Roepstorff P."/>
        </authorList>
    </citation>
    <scope>PROTEIN SEQUENCE</scope>
    <scope>MASS SPECTROMETRY</scope>
    <source>
        <tissue>Cuticle</tissue>
    </source>
</reference>
<protein>
    <recommendedName>
        <fullName>Larval cuticle protein A3A</fullName>
    </recommendedName>
    <alternativeName>
        <fullName>TM-LCP A3A</fullName>
        <shortName>TM-A3A</shortName>
    </alternativeName>
</protein>